<proteinExistence type="evidence at protein level"/>
<sequence length="1133" mass="125736">MPVQAPQWTDFLSCPICTQTFDETIRKPISLGCGHTVCKMCLNKLHRKACPFDQTTINTDIELLPVNSALLQLVGAQVPEQQPITLCSGVEDTKHYEEAKKCVEELALYLKPLSSARGVGLNSTTQSVLSRPMQRKLVTLVHCQLVEEEGRIRAMRAARSLGERTVTELILQHQNPQQLSSNLWAAVRARGCQFLGPAMQEEALKLVLLALEDGSALSRKVLVLFVVQRLEPRFPQASKTSIGHVVQLLYRASCFKVTKRDEDSSLMQLKEEFRTYEALRREHDSQIVQIAMEAGLRIAPDQWSSLLYGDQSHKSHMQSIIDKLQTPASFAQSVQELTIALQRTGDPANLNRLRPHLELLANIDPSPDAPPPTWEQLENGLVAVRTVVHGLVDYIQNHSKKGADQQQPPQHSKYKTYMCRDMKQRGGCPRGASCTFAHSQEELEKFRKMNKRLVPRRPLSASLGQLNEVGLPSAAILPDEGAVDLPSRKPPALPNGIVSTGNTVTQLIPRGTDPSYDSSLKPGKIDHLSSSAPGSPPDLLESVPKSISALPVNPHSIPPRGPADLPPMPVTKPLQMVPRGSQLYPAQQTDVYYQDPRGAAPPFEPAPYQQGMYYTPPPQCVSRFVRPPPSAPEPAPPYLDHYPPYLQERVVNSQYGTQPQQYPPIYPSHYDGRRVYPAPSYTREEIFRESPIPIEIPPAAVPSYVPESRERYQQIESYYPVAPHPTQIRPSYLREPPYSRLPPPPQPHPSLDELHRRRKEIMAQLEERKVISPPPFAPSPTLPPTFHPEEFLDEDLKVAGKYKGNDYSQYSPWSCDTIGSYIGTKDAKPKDVVAAGSVEMMNVESKGMRDQRLDLQRRAAETSDDDLIPFGDRPTVSRFGAISRTSKTIYQGAGPMQAMAPQGAPTKSINISDYSPYGTHGGWGASPYSPHQNIPSQGHFSERERISMSEVASHGKPLPSAEREQLRLELQQLNHQISQQTQLRGLEAVSNRLVLQREANTLAGQSQPPPPPPPKWPGMISSEQLSLELHQVEREIGKRTRELSMENQCSLDMKSKLNTSKQAENGQPEPQNKVPAEDLTLTFSDVPNGSALTQENISLLSNKTSSLNLSEDPEGGGDNNDSQRSGVTPSSAP</sequence>
<accession>Q5TC82</accession>
<accession>B3KVK1</accession>
<accession>Q5W180</accession>
<accession>Q5W181</accession>
<accession>Q8IVE6</accession>
<accession>Q8N9V1</accession>
<feature type="chain" id="PRO_0000055965" description="Roquin-1">
    <location>
        <begin position="1"/>
        <end position="1133"/>
    </location>
</feature>
<feature type="zinc finger region" description="RING-type; degenerate" evidence="2">
    <location>
        <begin position="14"/>
        <end position="54"/>
    </location>
</feature>
<feature type="zinc finger region" description="C3H1-type" evidence="3">
    <location>
        <begin position="413"/>
        <end position="441"/>
    </location>
</feature>
<feature type="region of interest" description="HEPN-N" evidence="8">
    <location>
        <begin position="89"/>
        <end position="173"/>
    </location>
</feature>
<feature type="region of interest" description="ROQ" evidence="6 8">
    <location>
        <begin position="174"/>
        <end position="326"/>
    </location>
</feature>
<feature type="region of interest" description="HEPN-C" evidence="8">
    <location>
        <begin position="327"/>
        <end position="396"/>
    </location>
</feature>
<feature type="region of interest" description="Disordered" evidence="4">
    <location>
        <begin position="505"/>
        <end position="542"/>
    </location>
</feature>
<feature type="region of interest" description="Disordered" evidence="4">
    <location>
        <begin position="1000"/>
        <end position="1019"/>
    </location>
</feature>
<feature type="region of interest" description="Disordered" evidence="4">
    <location>
        <begin position="1058"/>
        <end position="1078"/>
    </location>
</feature>
<feature type="region of interest" description="Disordered" evidence="4">
    <location>
        <begin position="1094"/>
        <end position="1133"/>
    </location>
</feature>
<feature type="compositionally biased region" description="Pro residues" evidence="4">
    <location>
        <begin position="1007"/>
        <end position="1016"/>
    </location>
</feature>
<feature type="compositionally biased region" description="Polar residues" evidence="4">
    <location>
        <begin position="1058"/>
        <end position="1070"/>
    </location>
</feature>
<feature type="compositionally biased region" description="Low complexity" evidence="4">
    <location>
        <begin position="1096"/>
        <end position="1110"/>
    </location>
</feature>
<feature type="compositionally biased region" description="Polar residues" evidence="4">
    <location>
        <begin position="1119"/>
        <end position="1133"/>
    </location>
</feature>
<feature type="binding site" evidence="1">
    <location>
        <position position="14"/>
    </location>
    <ligand>
        <name>Zn(2+)</name>
        <dbReference type="ChEBI" id="CHEBI:29105"/>
        <label>1</label>
    </ligand>
</feature>
<feature type="binding site" evidence="1">
    <location>
        <position position="17"/>
    </location>
    <ligand>
        <name>Zn(2+)</name>
        <dbReference type="ChEBI" id="CHEBI:29105"/>
        <label>1</label>
    </ligand>
</feature>
<feature type="binding site" evidence="1">
    <location>
        <position position="33"/>
    </location>
    <ligand>
        <name>Zn(2+)</name>
        <dbReference type="ChEBI" id="CHEBI:29105"/>
        <label>2</label>
    </ligand>
</feature>
<feature type="binding site" evidence="1">
    <location>
        <position position="35"/>
    </location>
    <ligand>
        <name>Zn(2+)</name>
        <dbReference type="ChEBI" id="CHEBI:29105"/>
        <label>2</label>
    </ligand>
</feature>
<feature type="binding site" evidence="1">
    <location>
        <position position="38"/>
    </location>
    <ligand>
        <name>Zn(2+)</name>
        <dbReference type="ChEBI" id="CHEBI:29105"/>
        <label>1</label>
    </ligand>
</feature>
<feature type="binding site" evidence="1">
    <location>
        <position position="50"/>
    </location>
    <ligand>
        <name>Zn(2+)</name>
        <dbReference type="ChEBI" id="CHEBI:29105"/>
        <label>2</label>
    </ligand>
</feature>
<feature type="binding site" evidence="1">
    <location>
        <position position="53"/>
    </location>
    <ligand>
        <name>Zn(2+)</name>
        <dbReference type="ChEBI" id="CHEBI:29105"/>
        <label>2</label>
    </ligand>
</feature>
<feature type="site" description="Cleavage; by MALT1" evidence="1">
    <location>
        <position position="510"/>
    </location>
</feature>
<feature type="site" description="Cleavage; by MALT1" evidence="1">
    <location>
        <position position="579"/>
    </location>
</feature>
<feature type="modified residue" description="Phosphoserine" evidence="21">
    <location>
        <position position="462"/>
    </location>
</feature>
<feature type="modified residue" description="Phosphoserine" evidence="1">
    <location>
        <position position="531"/>
    </location>
</feature>
<feature type="modified residue" description="Phosphoserine" evidence="19 20">
    <location>
        <position position="535"/>
    </location>
</feature>
<feature type="modified residue" description="Phosphoserine" evidence="20">
    <location>
        <position position="863"/>
    </location>
</feature>
<feature type="modified residue" description="Phosphoserine" evidence="1">
    <location>
        <position position="1110"/>
    </location>
</feature>
<feature type="splice variant" id="VSP_015015" description="In isoform 2." evidence="11">
    <location>
        <begin position="988"/>
        <end position="996"/>
    </location>
</feature>
<feature type="splice variant" id="VSP_015016" description="In isoform 2." evidence="11">
    <original>S</original>
    <variation>SS</variation>
    <location>
        <position position="1084"/>
    </location>
</feature>
<feature type="sequence variant" id="VAR_084832" description="In IMDYSHI; decreased protein abundance; loss of localization to P-bodies; decreased interaction with CCR4-NOT deadenylase complex; loss of function in regulation of deadenylation-dependent decapping of nuclear-transcribed mRNA; failed to regulate the production of inflammatory cytokines." evidence="9">
    <location>
        <begin position="688"/>
        <end position="1133"/>
    </location>
</feature>
<feature type="mutagenesis site" description="No effect on CDE RNA-binding but abolishes dsRNA binding; when associated with E-164 or A-322-323-A." evidence="5">
    <original>RK</original>
    <variation>EE</variation>
    <location>
        <begin position="135"/>
        <end position="136"/>
    </location>
</feature>
<feature type="mutagenesis site" description="No effect on CDE RNA-binding but abolishes dsRNA binding; when associated with 135-E-E-136." evidence="5">
    <original>R</original>
    <variation>E</variation>
    <location>
        <position position="164"/>
    </location>
</feature>
<feature type="mutagenesis site" description="Strongly decreases binding to RNA containing CDE stem-loop motifs. Abolishes binding to RNA containing CDE stem-loop motifs and dsRNA; when associated with 259-A-A-260." evidence="6">
    <original>RK</original>
    <variation>AA</variation>
    <location>
        <begin position="219"/>
        <end position="220"/>
    </location>
</feature>
<feature type="mutagenesis site" description="Abolishes CDE RNA-binding but no effect on dsRNA binding." evidence="5">
    <original>KT</original>
    <variation>EA</variation>
    <location>
        <begin position="239"/>
        <end position="240"/>
    </location>
</feature>
<feature type="mutagenesis site" description="Abolishes CDE RNA-binding but no effect on dsRNA binding." evidence="5">
    <original>QLLYR</original>
    <variation>ALLAE</variation>
    <location>
        <begin position="247"/>
        <end position="251"/>
    </location>
</feature>
<feature type="mutagenesis site" description="Strongly decreases binding to RNA containing CDE stem-loop motifs. Abolishes binding to RNA containing CDE stem-loop motifs and dsRNA; when associated with 219-A-A-220." evidence="6">
    <original>KR</original>
    <variation>AA</variation>
    <location>
        <begin position="259"/>
        <end position="260"/>
    </location>
</feature>
<feature type="mutagenesis site" description="Slightly reduces stem-loop RNA and dsRNA binding." evidence="5">
    <original>QS</original>
    <variation>AA</variation>
    <location>
        <begin position="318"/>
        <end position="319"/>
    </location>
</feature>
<feature type="mutagenesis site" description="No effect on CDE RNA-binding but abolishes dsRNA binding; when associated with 135-E-E-136." evidence="5">
    <original>DK</original>
    <variation>AA</variation>
    <location>
        <begin position="322"/>
        <end position="323"/>
    </location>
</feature>
<feature type="sequence conflict" description="In Ref. 1; BAC04186." evidence="12" ref="1">
    <original>L</original>
    <variation>P</variation>
    <location>
        <position position="986"/>
    </location>
</feature>
<feature type="helix" evidence="22">
    <location>
        <begin position="92"/>
        <end position="108"/>
    </location>
</feature>
<feature type="turn" evidence="22">
    <location>
        <begin position="112"/>
        <end position="115"/>
    </location>
</feature>
<feature type="strand" evidence="22">
    <location>
        <begin position="119"/>
        <end position="121"/>
    </location>
</feature>
<feature type="helix" evidence="22">
    <location>
        <begin position="122"/>
        <end position="124"/>
    </location>
</feature>
<feature type="strand" evidence="22">
    <location>
        <begin position="127"/>
        <end position="129"/>
    </location>
</feature>
<feature type="helix" evidence="22">
    <location>
        <begin position="131"/>
        <end position="142"/>
    </location>
</feature>
<feature type="helix" evidence="22">
    <location>
        <begin position="148"/>
        <end position="173"/>
    </location>
</feature>
<feature type="turn" evidence="22">
    <location>
        <begin position="176"/>
        <end position="178"/>
    </location>
</feature>
<feature type="helix" evidence="23">
    <location>
        <begin position="179"/>
        <end position="189"/>
    </location>
</feature>
<feature type="helix" evidence="23">
    <location>
        <begin position="197"/>
        <end position="211"/>
    </location>
</feature>
<feature type="strand" evidence="23">
    <location>
        <begin position="216"/>
        <end position="218"/>
    </location>
</feature>
<feature type="helix" evidence="23">
    <location>
        <begin position="219"/>
        <end position="233"/>
    </location>
</feature>
<feature type="helix" evidence="23">
    <location>
        <begin position="239"/>
        <end position="251"/>
    </location>
</feature>
<feature type="strand" evidence="23">
    <location>
        <begin position="255"/>
        <end position="258"/>
    </location>
</feature>
<feature type="strand" evidence="23">
    <location>
        <begin position="266"/>
        <end position="269"/>
    </location>
</feature>
<feature type="helix" evidence="23">
    <location>
        <begin position="271"/>
        <end position="273"/>
    </location>
</feature>
<feature type="helix" evidence="23">
    <location>
        <begin position="276"/>
        <end position="293"/>
    </location>
</feature>
<feature type="helix" evidence="23">
    <location>
        <begin position="300"/>
        <end position="308"/>
    </location>
</feature>
<feature type="strand" evidence="23">
    <location>
        <begin position="309"/>
        <end position="312"/>
    </location>
</feature>
<feature type="helix" evidence="23">
    <location>
        <begin position="314"/>
        <end position="325"/>
    </location>
</feature>
<feature type="helix" evidence="22">
    <location>
        <begin position="329"/>
        <end position="342"/>
    </location>
</feature>
<feature type="turn" evidence="22">
    <location>
        <begin position="343"/>
        <end position="345"/>
    </location>
</feature>
<feature type="helix" evidence="22">
    <location>
        <begin position="350"/>
        <end position="353"/>
    </location>
</feature>
<feature type="helix" evidence="22">
    <location>
        <begin position="354"/>
        <end position="361"/>
    </location>
</feature>
<feature type="helix" evidence="22">
    <location>
        <begin position="374"/>
        <end position="397"/>
    </location>
</feature>
<feature type="helix" evidence="24">
    <location>
        <begin position="420"/>
        <end position="423"/>
    </location>
</feature>
<feature type="helix" evidence="24">
    <location>
        <begin position="430"/>
        <end position="434"/>
    </location>
</feature>
<feature type="helix" evidence="24">
    <location>
        <begin position="440"/>
        <end position="443"/>
    </location>
</feature>
<feature type="helix" evidence="24">
    <location>
        <begin position="444"/>
        <end position="446"/>
    </location>
</feature>
<feature type="helix" evidence="24">
    <location>
        <begin position="447"/>
        <end position="450"/>
    </location>
</feature>
<evidence type="ECO:0000250" key="1">
    <source>
        <dbReference type="UniProtKB" id="Q4VGL6"/>
    </source>
</evidence>
<evidence type="ECO:0000255" key="2">
    <source>
        <dbReference type="PROSITE-ProRule" id="PRU00175"/>
    </source>
</evidence>
<evidence type="ECO:0000255" key="3">
    <source>
        <dbReference type="PROSITE-ProRule" id="PRU00723"/>
    </source>
</evidence>
<evidence type="ECO:0000256" key="4">
    <source>
        <dbReference type="SAM" id="MobiDB-lite"/>
    </source>
</evidence>
<evidence type="ECO:0000269" key="5">
    <source>
    </source>
</evidence>
<evidence type="ECO:0000269" key="6">
    <source>
    </source>
</evidence>
<evidence type="ECO:0000269" key="7">
    <source>
    </source>
</evidence>
<evidence type="ECO:0000269" key="8">
    <source>
    </source>
</evidence>
<evidence type="ECO:0000269" key="9">
    <source>
    </source>
</evidence>
<evidence type="ECO:0000269" key="10">
    <source ref="3"/>
</evidence>
<evidence type="ECO:0000303" key="11">
    <source>
    </source>
</evidence>
<evidence type="ECO:0000305" key="12"/>
<evidence type="ECO:0000312" key="13">
    <source>
        <dbReference type="HGNC" id="HGNC:29434"/>
    </source>
</evidence>
<evidence type="ECO:0007744" key="14">
    <source>
        <dbReference type="PDB" id="3X1O"/>
    </source>
</evidence>
<evidence type="ECO:0007744" key="15">
    <source>
        <dbReference type="PDB" id="4QIK"/>
    </source>
</evidence>
<evidence type="ECO:0007744" key="16">
    <source>
        <dbReference type="PDB" id="4QIL"/>
    </source>
</evidence>
<evidence type="ECO:0007744" key="17">
    <source>
        <dbReference type="PDB" id="4ULW"/>
    </source>
</evidence>
<evidence type="ECO:0007744" key="18">
    <source>
        <dbReference type="PDB" id="4YWQ"/>
    </source>
</evidence>
<evidence type="ECO:0007744" key="19">
    <source>
    </source>
</evidence>
<evidence type="ECO:0007744" key="20">
    <source>
    </source>
</evidence>
<evidence type="ECO:0007744" key="21">
    <source>
    </source>
</evidence>
<evidence type="ECO:0007829" key="22">
    <source>
        <dbReference type="PDB" id="4QIK"/>
    </source>
</evidence>
<evidence type="ECO:0007829" key="23">
    <source>
        <dbReference type="PDB" id="4YWQ"/>
    </source>
</evidence>
<evidence type="ECO:0007829" key="24">
    <source>
        <dbReference type="PDB" id="8RHS"/>
    </source>
</evidence>
<dbReference type="EC" id="2.3.2.27" evidence="8"/>
<dbReference type="EMBL" id="AK093501">
    <property type="protein sequence ID" value="BAC04186.1"/>
    <property type="status" value="ALT_INIT"/>
    <property type="molecule type" value="mRNA"/>
</dbReference>
<dbReference type="EMBL" id="AK122948">
    <property type="protein sequence ID" value="BAG53813.1"/>
    <property type="molecule type" value="mRNA"/>
</dbReference>
<dbReference type="EMBL" id="AL121983">
    <property type="status" value="NOT_ANNOTATED_CDS"/>
    <property type="molecule type" value="Genomic_DNA"/>
</dbReference>
<dbReference type="EMBL" id="AL136170">
    <property type="status" value="NOT_ANNOTATED_CDS"/>
    <property type="molecule type" value="Genomic_DNA"/>
</dbReference>
<dbReference type="EMBL" id="AB095945">
    <property type="protein sequence ID" value="BAC23121.1"/>
    <property type="molecule type" value="mRNA"/>
</dbReference>
<dbReference type="CCDS" id="CCDS30940.1">
    <molecule id="Q5TC82-1"/>
</dbReference>
<dbReference type="CCDS" id="CCDS72987.1">
    <molecule id="Q5TC82-2"/>
</dbReference>
<dbReference type="RefSeq" id="NP_001287779.1">
    <property type="nucleotide sequence ID" value="NM_001300850.1"/>
</dbReference>
<dbReference type="RefSeq" id="NP_001287780.1">
    <molecule id="Q5TC82-2"/>
    <property type="nucleotide sequence ID" value="NM_001300851.1"/>
</dbReference>
<dbReference type="RefSeq" id="NP_001287781.1">
    <property type="nucleotide sequence ID" value="NM_001300852.1"/>
</dbReference>
<dbReference type="RefSeq" id="NP_742068.1">
    <molecule id="Q5TC82-1"/>
    <property type="nucleotide sequence ID" value="NM_172071.4"/>
</dbReference>
<dbReference type="RefSeq" id="XP_047303047.1">
    <molecule id="Q5TC82-1"/>
    <property type="nucleotide sequence ID" value="XM_047447091.1"/>
</dbReference>
<dbReference type="RefSeq" id="XP_047303048.1">
    <molecule id="Q5TC82-2"/>
    <property type="nucleotide sequence ID" value="XM_047447092.1"/>
</dbReference>
<dbReference type="RefSeq" id="XP_047303049.1">
    <molecule id="Q5TC82-2"/>
    <property type="nucleotide sequence ID" value="XM_047447093.1"/>
</dbReference>
<dbReference type="RefSeq" id="XP_054190591.1">
    <molecule id="Q5TC82-1"/>
    <property type="nucleotide sequence ID" value="XM_054334616.1"/>
</dbReference>
<dbReference type="RefSeq" id="XP_054190592.1">
    <molecule id="Q5TC82-2"/>
    <property type="nucleotide sequence ID" value="XM_054334617.1"/>
</dbReference>
<dbReference type="RefSeq" id="XP_054190593.1">
    <molecule id="Q5TC82-2"/>
    <property type="nucleotide sequence ID" value="XM_054334618.1"/>
</dbReference>
<dbReference type="PDB" id="3X1O">
    <property type="method" value="X-ray"/>
    <property type="resolution" value="2.20 A"/>
    <property type="chains" value="A/B=145-344"/>
</dbReference>
<dbReference type="PDB" id="4QIK">
    <property type="method" value="X-ray"/>
    <property type="resolution" value="1.90 A"/>
    <property type="chains" value="A/B=88-407"/>
</dbReference>
<dbReference type="PDB" id="4QIL">
    <property type="method" value="X-ray"/>
    <property type="resolution" value="2.90 A"/>
    <property type="chains" value="A/B=88-407"/>
</dbReference>
<dbReference type="PDB" id="4ULW">
    <property type="method" value="X-ray"/>
    <property type="resolution" value="1.91 A"/>
    <property type="chains" value="A/B=177-328"/>
</dbReference>
<dbReference type="PDB" id="4YWQ">
    <property type="method" value="X-ray"/>
    <property type="resolution" value="1.70 A"/>
    <property type="chains" value="A/B=159-328"/>
</dbReference>
<dbReference type="PDB" id="8RHS">
    <property type="method" value="NMR"/>
    <property type="chains" value="A=411-454"/>
</dbReference>
<dbReference type="PDBsum" id="3X1O"/>
<dbReference type="PDBsum" id="4QIK"/>
<dbReference type="PDBsum" id="4QIL"/>
<dbReference type="PDBsum" id="4ULW"/>
<dbReference type="PDBsum" id="4YWQ"/>
<dbReference type="PDBsum" id="8RHS"/>
<dbReference type="BMRB" id="Q5TC82"/>
<dbReference type="SMR" id="Q5TC82"/>
<dbReference type="BioGRID" id="127186">
    <property type="interactions" value="679"/>
</dbReference>
<dbReference type="CORUM" id="Q5TC82"/>
<dbReference type="FunCoup" id="Q5TC82">
    <property type="interactions" value="681"/>
</dbReference>
<dbReference type="IntAct" id="Q5TC82">
    <property type="interactions" value="17"/>
</dbReference>
<dbReference type="MINT" id="Q5TC82"/>
<dbReference type="STRING" id="9606.ENSP00000356669"/>
<dbReference type="GlyGen" id="Q5TC82">
    <property type="glycosylation" value="3 sites, 1 O-linked glycan (2 sites)"/>
</dbReference>
<dbReference type="iPTMnet" id="Q5TC82"/>
<dbReference type="PhosphoSitePlus" id="Q5TC82"/>
<dbReference type="BioMuta" id="RC3H1"/>
<dbReference type="DMDM" id="73621450"/>
<dbReference type="jPOST" id="Q5TC82"/>
<dbReference type="MassIVE" id="Q5TC82"/>
<dbReference type="PaxDb" id="9606-ENSP00000356669"/>
<dbReference type="PeptideAtlas" id="Q5TC82"/>
<dbReference type="ProteomicsDB" id="64943">
    <molecule id="Q5TC82-1"/>
</dbReference>
<dbReference type="ProteomicsDB" id="64944">
    <molecule id="Q5TC82-2"/>
</dbReference>
<dbReference type="Pumba" id="Q5TC82"/>
<dbReference type="Antibodypedia" id="34400">
    <property type="antibodies" value="143 antibodies from 22 providers"/>
</dbReference>
<dbReference type="DNASU" id="149041"/>
<dbReference type="Ensembl" id="ENST00000367694.2">
    <molecule id="Q5TC82-2"/>
    <property type="protein sequence ID" value="ENSP00000356667.2"/>
    <property type="gene ID" value="ENSG00000135870.13"/>
</dbReference>
<dbReference type="Ensembl" id="ENST00000367696.7">
    <molecule id="Q5TC82-1"/>
    <property type="protein sequence ID" value="ENSP00000356669.2"/>
    <property type="gene ID" value="ENSG00000135870.13"/>
</dbReference>
<dbReference type="GeneID" id="149041"/>
<dbReference type="KEGG" id="hsa:149041"/>
<dbReference type="MANE-Select" id="ENST00000367696.7">
    <property type="protein sequence ID" value="ENSP00000356669.2"/>
    <property type="RefSeq nucleotide sequence ID" value="NM_172071.4"/>
    <property type="RefSeq protein sequence ID" value="NP_742068.1"/>
</dbReference>
<dbReference type="UCSC" id="uc001gju.5">
    <molecule id="Q5TC82-1"/>
    <property type="organism name" value="human"/>
</dbReference>
<dbReference type="AGR" id="HGNC:29434"/>
<dbReference type="CTD" id="149041"/>
<dbReference type="DisGeNET" id="149041"/>
<dbReference type="GeneCards" id="RC3H1"/>
<dbReference type="HGNC" id="HGNC:29434">
    <property type="gene designation" value="RC3H1"/>
</dbReference>
<dbReference type="HPA" id="ENSG00000135870">
    <property type="expression patterns" value="Low tissue specificity"/>
</dbReference>
<dbReference type="MalaCards" id="RC3H1"/>
<dbReference type="MIM" id="609424">
    <property type="type" value="gene"/>
</dbReference>
<dbReference type="MIM" id="618998">
    <property type="type" value="phenotype"/>
</dbReference>
<dbReference type="neXtProt" id="NX_Q5TC82"/>
<dbReference type="OpenTargets" id="ENSG00000135870"/>
<dbReference type="PharmGKB" id="PA142671090"/>
<dbReference type="VEuPathDB" id="HostDB:ENSG00000135870"/>
<dbReference type="eggNOG" id="KOG3161">
    <property type="taxonomic scope" value="Eukaryota"/>
</dbReference>
<dbReference type="GeneTree" id="ENSGT00940000157143"/>
<dbReference type="HOGENOM" id="CLU_004948_0_0_1"/>
<dbReference type="InParanoid" id="Q5TC82"/>
<dbReference type="OMA" id="SKTMYQG"/>
<dbReference type="OrthoDB" id="10067217at2759"/>
<dbReference type="PAN-GO" id="Q5TC82">
    <property type="GO annotations" value="8 GO annotations based on evolutionary models"/>
</dbReference>
<dbReference type="PhylomeDB" id="Q5TC82"/>
<dbReference type="TreeFam" id="TF317698"/>
<dbReference type="PathwayCommons" id="Q5TC82"/>
<dbReference type="SignaLink" id="Q5TC82"/>
<dbReference type="SIGNOR" id="Q5TC82"/>
<dbReference type="UniPathway" id="UPA00143"/>
<dbReference type="BioGRID-ORCS" id="149041">
    <property type="hits" value="44 hits in 1196 CRISPR screens"/>
</dbReference>
<dbReference type="CD-CODE" id="232F8A39">
    <property type="entry name" value="P-body"/>
</dbReference>
<dbReference type="CD-CODE" id="DEE660B4">
    <property type="entry name" value="Stress granule"/>
</dbReference>
<dbReference type="ChiTaRS" id="RC3H1">
    <property type="organism name" value="human"/>
</dbReference>
<dbReference type="EvolutionaryTrace" id="Q5TC82"/>
<dbReference type="GenomeRNAi" id="149041"/>
<dbReference type="Pharos" id="Q5TC82">
    <property type="development level" value="Tbio"/>
</dbReference>
<dbReference type="PRO" id="PR:Q5TC82"/>
<dbReference type="Proteomes" id="UP000005640">
    <property type="component" value="Chromosome 1"/>
</dbReference>
<dbReference type="RNAct" id="Q5TC82">
    <property type="molecule type" value="protein"/>
</dbReference>
<dbReference type="Bgee" id="ENSG00000135870">
    <property type="expression patterns" value="Expressed in tibialis anterior and 195 other cell types or tissues"/>
</dbReference>
<dbReference type="GO" id="GO:0010494">
    <property type="term" value="C:cytoplasmic stress granule"/>
    <property type="evidence" value="ECO:0000250"/>
    <property type="project" value="BHF-UCL"/>
</dbReference>
<dbReference type="GO" id="GO:0000932">
    <property type="term" value="C:P-body"/>
    <property type="evidence" value="ECO:0000315"/>
    <property type="project" value="UniProtKB"/>
</dbReference>
<dbReference type="GO" id="GO:1905762">
    <property type="term" value="F:CCR4-NOT complex binding"/>
    <property type="evidence" value="ECO:0000315"/>
    <property type="project" value="UniProtKB"/>
</dbReference>
<dbReference type="GO" id="GO:0003725">
    <property type="term" value="F:double-stranded RNA binding"/>
    <property type="evidence" value="ECO:0000314"/>
    <property type="project" value="UniProtKB"/>
</dbReference>
<dbReference type="GO" id="GO:0035198">
    <property type="term" value="F:miRNA binding"/>
    <property type="evidence" value="ECO:0000250"/>
    <property type="project" value="UniProtKB"/>
</dbReference>
<dbReference type="GO" id="GO:0003730">
    <property type="term" value="F:mRNA 3'-UTR binding"/>
    <property type="evidence" value="ECO:0000250"/>
    <property type="project" value="BHF-UCL"/>
</dbReference>
<dbReference type="GO" id="GO:0003729">
    <property type="term" value="F:mRNA binding"/>
    <property type="evidence" value="ECO:0000318"/>
    <property type="project" value="GO_Central"/>
</dbReference>
<dbReference type="GO" id="GO:0003723">
    <property type="term" value="F:RNA binding"/>
    <property type="evidence" value="ECO:0007005"/>
    <property type="project" value="UniProtKB"/>
</dbReference>
<dbReference type="GO" id="GO:0035613">
    <property type="term" value="F:RNA stem-loop binding"/>
    <property type="evidence" value="ECO:0000314"/>
    <property type="project" value="UniProtKB"/>
</dbReference>
<dbReference type="GO" id="GO:0061630">
    <property type="term" value="F:ubiquitin protein ligase activity"/>
    <property type="evidence" value="ECO:0000318"/>
    <property type="project" value="GO_Central"/>
</dbReference>
<dbReference type="GO" id="GO:0004842">
    <property type="term" value="F:ubiquitin-protein transferase activity"/>
    <property type="evidence" value="ECO:0000314"/>
    <property type="project" value="UniProtKB"/>
</dbReference>
<dbReference type="GO" id="GO:0008270">
    <property type="term" value="F:zinc ion binding"/>
    <property type="evidence" value="ECO:0000250"/>
    <property type="project" value="UniProtKB"/>
</dbReference>
<dbReference type="GO" id="GO:0061158">
    <property type="term" value="P:3'-UTR-mediated mRNA destabilization"/>
    <property type="evidence" value="ECO:0000250"/>
    <property type="project" value="UniProtKB"/>
</dbReference>
<dbReference type="GO" id="GO:0001782">
    <property type="term" value="P:B cell homeostasis"/>
    <property type="evidence" value="ECO:0007669"/>
    <property type="project" value="Ensembl"/>
</dbReference>
<dbReference type="GO" id="GO:0071347">
    <property type="term" value="P:cellular response to interleukin-1"/>
    <property type="evidence" value="ECO:0000250"/>
    <property type="project" value="UniProtKB"/>
</dbReference>
<dbReference type="GO" id="GO:0048535">
    <property type="term" value="P:lymph node development"/>
    <property type="evidence" value="ECO:0007669"/>
    <property type="project" value="Ensembl"/>
</dbReference>
<dbReference type="GO" id="GO:0046007">
    <property type="term" value="P:negative regulation of activated T cell proliferation"/>
    <property type="evidence" value="ECO:0000250"/>
    <property type="project" value="BHF-UCL"/>
</dbReference>
<dbReference type="GO" id="GO:0030889">
    <property type="term" value="P:negative regulation of B cell proliferation"/>
    <property type="evidence" value="ECO:0000250"/>
    <property type="project" value="BHF-UCL"/>
</dbReference>
<dbReference type="GO" id="GO:0002635">
    <property type="term" value="P:negative regulation of germinal center formation"/>
    <property type="evidence" value="ECO:0000250"/>
    <property type="project" value="BHF-UCL"/>
</dbReference>
<dbReference type="GO" id="GO:2000320">
    <property type="term" value="P:negative regulation of T-helper 17 cell differentiation"/>
    <property type="evidence" value="ECO:0000250"/>
    <property type="project" value="UniProtKB"/>
</dbReference>
<dbReference type="GO" id="GO:0045623">
    <property type="term" value="P:negative regulation of T-helper cell differentiation"/>
    <property type="evidence" value="ECO:0000250"/>
    <property type="project" value="BHF-UCL"/>
</dbReference>
<dbReference type="GO" id="GO:0000956">
    <property type="term" value="P:nuclear-transcribed mRNA catabolic process"/>
    <property type="evidence" value="ECO:0000314"/>
    <property type="project" value="UniProtKB"/>
</dbReference>
<dbReference type="GO" id="GO:0000288">
    <property type="term" value="P:nuclear-transcribed mRNA catabolic process, deadenylation-dependent decay"/>
    <property type="evidence" value="ECO:0000318"/>
    <property type="project" value="GO_Central"/>
</dbReference>
<dbReference type="GO" id="GO:0000184">
    <property type="term" value="P:nuclear-transcribed mRNA catabolic process, nonsense-mediated decay"/>
    <property type="evidence" value="ECO:0000250"/>
    <property type="project" value="UniProtKB"/>
</dbReference>
<dbReference type="GO" id="GO:0033962">
    <property type="term" value="P:P-body assembly"/>
    <property type="evidence" value="ECO:0000250"/>
    <property type="project" value="BHF-UCL"/>
</dbReference>
<dbReference type="GO" id="GO:1901224">
    <property type="term" value="P:positive regulation of non-canonical NF-kappaB signal transduction"/>
    <property type="evidence" value="ECO:0007669"/>
    <property type="project" value="Ensembl"/>
</dbReference>
<dbReference type="GO" id="GO:0010608">
    <property type="term" value="P:post-transcriptional regulation of gene expression"/>
    <property type="evidence" value="ECO:0000250"/>
    <property type="project" value="BHF-UCL"/>
</dbReference>
<dbReference type="GO" id="GO:0000209">
    <property type="term" value="P:protein polyubiquitination"/>
    <property type="evidence" value="ECO:0000314"/>
    <property type="project" value="UniProtKB"/>
</dbReference>
<dbReference type="GO" id="GO:0002634">
    <property type="term" value="P:regulation of germinal center formation"/>
    <property type="evidence" value="ECO:0000250"/>
    <property type="project" value="BHF-UCL"/>
</dbReference>
<dbReference type="GO" id="GO:2000628">
    <property type="term" value="P:regulation of miRNA metabolic process"/>
    <property type="evidence" value="ECO:0000250"/>
    <property type="project" value="UniProtKB"/>
</dbReference>
<dbReference type="GO" id="GO:0043488">
    <property type="term" value="P:regulation of mRNA stability"/>
    <property type="evidence" value="ECO:0000250"/>
    <property type="project" value="BHF-UCL"/>
</dbReference>
<dbReference type="GO" id="GO:1900151">
    <property type="term" value="P:regulation of nuclear-transcribed mRNA catabolic process, deadenylation-dependent decay"/>
    <property type="evidence" value="ECO:0000315"/>
    <property type="project" value="UniProtKB"/>
</dbReference>
<dbReference type="GO" id="GO:0050856">
    <property type="term" value="P:regulation of T cell receptor signaling pathway"/>
    <property type="evidence" value="ECO:0000250"/>
    <property type="project" value="BHF-UCL"/>
</dbReference>
<dbReference type="GO" id="GO:0048536">
    <property type="term" value="P:spleen development"/>
    <property type="evidence" value="ECO:0007669"/>
    <property type="project" value="Ensembl"/>
</dbReference>
<dbReference type="GO" id="GO:0043029">
    <property type="term" value="P:T cell homeostasis"/>
    <property type="evidence" value="ECO:0007669"/>
    <property type="project" value="Ensembl"/>
</dbReference>
<dbReference type="GO" id="GO:0042098">
    <property type="term" value="P:T cell proliferation"/>
    <property type="evidence" value="ECO:0007669"/>
    <property type="project" value="Ensembl"/>
</dbReference>
<dbReference type="GO" id="GO:0050852">
    <property type="term" value="P:T cell receptor signaling pathway"/>
    <property type="evidence" value="ECO:0000250"/>
    <property type="project" value="UniProtKB"/>
</dbReference>
<dbReference type="GO" id="GO:0061470">
    <property type="term" value="P:T follicular helper cell differentiation"/>
    <property type="evidence" value="ECO:0007669"/>
    <property type="project" value="Ensembl"/>
</dbReference>
<dbReference type="GO" id="GO:0006511">
    <property type="term" value="P:ubiquitin-dependent protein catabolic process"/>
    <property type="evidence" value="ECO:0000318"/>
    <property type="project" value="GO_Central"/>
</dbReference>
<dbReference type="CDD" id="cd16781">
    <property type="entry name" value="mRING-HC-C3HC3D_Roquin1"/>
    <property type="match status" value="1"/>
</dbReference>
<dbReference type="FunFam" id="1.20.120.1790:FF:000001">
    <property type="entry name" value="roquin-1 isoform X1"/>
    <property type="match status" value="1"/>
</dbReference>
<dbReference type="FunFam" id="4.10.1000.10:FF:000004">
    <property type="entry name" value="roquin-1 isoform X2"/>
    <property type="match status" value="1"/>
</dbReference>
<dbReference type="FunFam" id="3.30.40.10:FF:000047">
    <property type="entry name" value="Roquin-2 isoform 1"/>
    <property type="match status" value="1"/>
</dbReference>
<dbReference type="Gene3D" id="1.20.120.1790">
    <property type="match status" value="1"/>
</dbReference>
<dbReference type="Gene3D" id="4.10.1000.10">
    <property type="entry name" value="Zinc finger, CCCH-type"/>
    <property type="match status" value="1"/>
</dbReference>
<dbReference type="Gene3D" id="3.30.40.10">
    <property type="entry name" value="Zinc/RING finger domain, C3HC4 (zinc finger)"/>
    <property type="match status" value="1"/>
</dbReference>
<dbReference type="InterPro" id="IPR041523">
    <property type="entry name" value="ROQ_II"/>
</dbReference>
<dbReference type="InterPro" id="IPR048575">
    <property type="entry name" value="Roquin_1_2-like_ROQ"/>
</dbReference>
<dbReference type="InterPro" id="IPR052249">
    <property type="entry name" value="Roquin_domain"/>
</dbReference>
<dbReference type="InterPro" id="IPR000571">
    <property type="entry name" value="Znf_CCCH"/>
</dbReference>
<dbReference type="InterPro" id="IPR036855">
    <property type="entry name" value="Znf_CCCH_sf"/>
</dbReference>
<dbReference type="InterPro" id="IPR001841">
    <property type="entry name" value="Znf_RING"/>
</dbReference>
<dbReference type="InterPro" id="IPR013083">
    <property type="entry name" value="Znf_RING/FYVE/PHD"/>
</dbReference>
<dbReference type="InterPro" id="IPR017907">
    <property type="entry name" value="Znf_RING_CS"/>
</dbReference>
<dbReference type="PANTHER" id="PTHR13139">
    <property type="entry name" value="RING FINGER AND CCCH-TYPE ZINC FINGER DOMAIN-CONTAINING PROTEIN"/>
    <property type="match status" value="1"/>
</dbReference>
<dbReference type="PANTHER" id="PTHR13139:SF6">
    <property type="entry name" value="ROQUIN-1"/>
    <property type="match status" value="1"/>
</dbReference>
<dbReference type="Pfam" id="PF18386">
    <property type="entry name" value="ROQ_II"/>
    <property type="match status" value="1"/>
</dbReference>
<dbReference type="Pfam" id="PF21206">
    <property type="entry name" value="Roquin_1_2-like_ROQ"/>
    <property type="match status" value="1"/>
</dbReference>
<dbReference type="Pfam" id="PF14634">
    <property type="entry name" value="zf-RING_5"/>
    <property type="match status" value="1"/>
</dbReference>
<dbReference type="SMART" id="SM00184">
    <property type="entry name" value="RING"/>
    <property type="match status" value="1"/>
</dbReference>
<dbReference type="SMART" id="SM00356">
    <property type="entry name" value="ZnF_C3H1"/>
    <property type="match status" value="1"/>
</dbReference>
<dbReference type="SUPFAM" id="SSF90229">
    <property type="entry name" value="CCCH zinc finger"/>
    <property type="match status" value="1"/>
</dbReference>
<dbReference type="SUPFAM" id="SSF57850">
    <property type="entry name" value="RING/U-box"/>
    <property type="match status" value="1"/>
</dbReference>
<dbReference type="PROSITE" id="PS50103">
    <property type="entry name" value="ZF_C3H1"/>
    <property type="match status" value="1"/>
</dbReference>
<dbReference type="PROSITE" id="PS00518">
    <property type="entry name" value="ZF_RING_1"/>
    <property type="match status" value="1"/>
</dbReference>
<dbReference type="PROSITE" id="PS50089">
    <property type="entry name" value="ZF_RING_2"/>
    <property type="match status" value="1"/>
</dbReference>
<comment type="function">
    <text evidence="1 5 6 7 8 9">Post-transcriptional repressor of mRNAs containing a conserved stem loop motif, called constitutive decay element (CDE), which is often located in the 3'-UTR, as in HMGXB3, ICOS, IER3, NFKBID, NFKBIZ, PPP1R10, TNF, TNFRSF4 and in many more mRNAs (PubMed:25026078, PubMed:31636267). Cleaves translationally inactive mRNAs harboring a stem-loop (SL), often located in their 3'-UTRs, during the early phase of inflammation in a helicase UPF1-independent manner (By similarity). Binds to CDE and promotes mRNA deadenylation and degradation. This process does not involve miRNAs (By similarity). In follicular helper T (Tfh) cells, represses of ICOS and TNFRSF4 expression, thus preventing spontaneous Tfh cell differentiation, germinal center B-cell differentiation in the absence of immunization and autoimmunity (By similarity). In resting or LPS-stimulated macrophages, controls inflammation by suppressing TNF expression (By similarity). Also recognizes CDE in its own mRNA and in that of paralogous RC3H2, possibly leading to feedback loop regulation (By similarity). Recognizes and binds mRNAs containing a hexaloop stem-loop motif, called alternative decay element (ADE) (By similarity). Together with ZC3H12A, destabilizes TNFRSF4/OX40 mRNA by binding to the conserved stem loop structure in its 3'UTR (By similarity). Able to interact with double-stranded RNA (dsRNA) (PubMed:25026078, PubMed:25504471). miRNA-binding protein that regulates microRNA homeostasis. Enhances DICER-mediated processing of pre-MIR146a but reduces mature MIR146a levels through an increase of 3' end uridylation. Both inhibits ICOS mRNA expression and they may act together to exert the suppression (PubMed:25697406, PubMed:31636267). Acts as a ubiquitin E3 ligase. Pairs with E2 enzymes UBE2A, UBE2B, UBE2D2, UBE2F, UBE2G1, UBE2G2 and UBE2L3 and produces polyubiquitin chains (PubMed:26489670). Shows the strongest activity when paired with UBE2N:UBE2V1 or UBE2N:UBE2V2 E2 complexes and generate both short and long polyubiquitin chains (PubMed:26489670).</text>
</comment>
<comment type="catalytic activity">
    <reaction evidence="8">
        <text>S-ubiquitinyl-[E2 ubiquitin-conjugating enzyme]-L-cysteine + [acceptor protein]-L-lysine = [E2 ubiquitin-conjugating enzyme]-L-cysteine + N(6)-ubiquitinyl-[acceptor protein]-L-lysine.</text>
        <dbReference type="EC" id="2.3.2.27"/>
    </reaction>
</comment>
<comment type="pathway">
    <text evidence="8">Protein modification; protein ubiquitination.</text>
</comment>
<comment type="subunit">
    <text evidence="1 5 6 7 9">Able to homodimerize (PubMed:25026078, PubMed:25504471, PubMed:25697406). Interacts with DDX6 and EDC4 (By similarity). Interacts with CCR4-NOT deadenylase complex (PubMed:31636267). Interacts with RC3H1; the interaction is RNA independent (PubMed:25697406).</text>
</comment>
<comment type="interaction">
    <interactant intactId="EBI-7958436">
        <id>Q5TC82</id>
    </interactant>
    <interactant intactId="EBI-1046993">
        <id>Q66GS9</id>
        <label>CEP135</label>
    </interactant>
    <organismsDiffer>false</organismsDiffer>
    <experiments>4</experiments>
</comment>
<comment type="subcellular location">
    <subcellularLocation>
        <location evidence="9">Cytoplasm</location>
        <location evidence="9">P-body</location>
    </subcellularLocation>
    <subcellularLocation>
        <location evidence="1">Cytoplasmic granule</location>
    </subcellularLocation>
    <text evidence="1">During stress, such as that induced by arsenite treatment, localizes to cytosolic stress granules (By similarity). Localization to stress granules, but not to P-bodies, depends upon the RING-type zinc finger (By similarity). ICOS repression may correlate with the localization to P-bodies, not to stress granules (By similarity).</text>
</comment>
<comment type="alternative products">
    <event type="alternative splicing"/>
    <isoform>
        <id>Q5TC82-1</id>
        <name>1</name>
        <sequence type="displayed"/>
    </isoform>
    <isoform>
        <id>Q5TC82-2</id>
        <name>2</name>
        <sequence type="described" ref="VSP_015015 VSP_015016"/>
    </isoform>
</comment>
<comment type="tissue specificity">
    <text evidence="10">Widely expressed. Expressed at higher level in cerebellum, spleen, ovary and liver.</text>
</comment>
<comment type="domain">
    <text evidence="1">The RING-type zinc finger is required for proper localization to stress granules, but not to P-bodies.</text>
</comment>
<comment type="domain">
    <text evidence="1 5 6">The ROQ region is required for CDE RNA-binding (PubMed:25026078, PubMed:25504471). Has 2 separate RNA-binding sites, one for CDE RNA and the other for dsRNA, both sites are important for mRNA decay (PubMed:25026078). ADE RNA-binding involves an extended binding surface on the ROQ region with a number of additional residues compared with the CDE RNA (By similarity). It may also be involved in localization to stress granules (By similarity).</text>
</comment>
<comment type="domain">
    <text evidence="8">HEPN (higher eukaryotes and prokaryotes nucleotide-binding) are observed in both N- and C-terminal sides of ROQ domain with 3D structure even if they are poredcted on the basis of sequence.</text>
</comment>
<comment type="PTM">
    <text evidence="1">Proteolytically cleaved after Arg-510 and Arg-579 by MALT1 in activated CD4(+) T cells; cleavage at Arg-510 and Arg-579 is critical for promoting RC3H1 degradation in response to T-cell receptor (TCR) stimulation, and hence is necessary for prolonging the stability of a set of mRNAs controlling Th17 cell differentiation.</text>
</comment>
<comment type="disease" evidence="9">
    <disease id="DI-05904">
        <name>Immune dysregulation and systemic hyperinflammation syndrome</name>
        <acronym>IMDYSHI</acronym>
        <description>An autosomal recessive disorder characterized by systemic hyperinflammation in the absence of an infectious agent or autoimmune trigger. Features include lymphadenopathy, hepatosplenomegaly, recurrent fever, and laboratory evidence of immune dysregulation with abnormal immune cell populations and increased serum levels of inflammatory cytokines.</description>
        <dbReference type="MIM" id="618998"/>
    </disease>
    <text>The disease is caused by variants affecting the gene represented in this entry.</text>
</comment>
<comment type="sequence caution" evidence="12">
    <conflict type="erroneous initiation">
        <sequence resource="EMBL-CDS" id="BAC04186"/>
    </conflict>
    <text>Truncated N-terminus.</text>
</comment>
<organism>
    <name type="scientific">Homo sapiens</name>
    <name type="common">Human</name>
    <dbReference type="NCBI Taxonomy" id="9606"/>
    <lineage>
        <taxon>Eukaryota</taxon>
        <taxon>Metazoa</taxon>
        <taxon>Chordata</taxon>
        <taxon>Craniata</taxon>
        <taxon>Vertebrata</taxon>
        <taxon>Euteleostomi</taxon>
        <taxon>Mammalia</taxon>
        <taxon>Eutheria</taxon>
        <taxon>Euarchontoglires</taxon>
        <taxon>Primates</taxon>
        <taxon>Haplorrhini</taxon>
        <taxon>Catarrhini</taxon>
        <taxon>Hominidae</taxon>
        <taxon>Homo</taxon>
    </lineage>
</organism>
<protein>
    <recommendedName>
        <fullName evidence="12">Roquin-1</fullName>
        <shortName evidence="12">Roquin</shortName>
        <ecNumber evidence="8">2.3.2.27</ecNumber>
    </recommendedName>
    <alternativeName>
        <fullName>RING finger and C3H zinc finger protein 1</fullName>
    </alternativeName>
    <alternativeName>
        <fullName>RING finger and CCCH-type zinc finger domain-containing protein 1</fullName>
    </alternativeName>
    <alternativeName>
        <fullName>RING finger protein 198</fullName>
    </alternativeName>
</protein>
<keyword id="KW-0002">3D-structure</keyword>
<keyword id="KW-0025">Alternative splicing</keyword>
<keyword id="KW-0963">Cytoplasm</keyword>
<keyword id="KW-0225">Disease variant</keyword>
<keyword id="KW-0479">Metal-binding</keyword>
<keyword id="KW-0597">Phosphoprotein</keyword>
<keyword id="KW-1267">Proteomics identification</keyword>
<keyword id="KW-1185">Reference proteome</keyword>
<keyword id="KW-0677">Repeat</keyword>
<keyword id="KW-0694">RNA-binding</keyword>
<keyword id="KW-0808">Transferase</keyword>
<keyword id="KW-0862">Zinc</keyword>
<keyword id="KW-0863">Zinc-finger</keyword>
<gene>
    <name evidence="13" type="primary">RC3H1</name>
    <name type="synonym">KIAA2025</name>
    <name type="synonym">RNF198</name>
</gene>
<name>RC3H1_HUMAN</name>
<reference key="1">
    <citation type="journal article" date="2004" name="Nat. Genet.">
        <title>Complete sequencing and characterization of 21,243 full-length human cDNAs.</title>
        <authorList>
            <person name="Ota T."/>
            <person name="Suzuki Y."/>
            <person name="Nishikawa T."/>
            <person name="Otsuki T."/>
            <person name="Sugiyama T."/>
            <person name="Irie R."/>
            <person name="Wakamatsu A."/>
            <person name="Hayashi K."/>
            <person name="Sato H."/>
            <person name="Nagai K."/>
            <person name="Kimura K."/>
            <person name="Makita H."/>
            <person name="Sekine M."/>
            <person name="Obayashi M."/>
            <person name="Nishi T."/>
            <person name="Shibahara T."/>
            <person name="Tanaka T."/>
            <person name="Ishii S."/>
            <person name="Yamamoto J."/>
            <person name="Saito K."/>
            <person name="Kawai Y."/>
            <person name="Isono Y."/>
            <person name="Nakamura Y."/>
            <person name="Nagahari K."/>
            <person name="Murakami K."/>
            <person name="Yasuda T."/>
            <person name="Iwayanagi T."/>
            <person name="Wagatsuma M."/>
            <person name="Shiratori A."/>
            <person name="Sudo H."/>
            <person name="Hosoiri T."/>
            <person name="Kaku Y."/>
            <person name="Kodaira H."/>
            <person name="Kondo H."/>
            <person name="Sugawara M."/>
            <person name="Takahashi M."/>
            <person name="Kanda K."/>
            <person name="Yokoi T."/>
            <person name="Furuya T."/>
            <person name="Kikkawa E."/>
            <person name="Omura Y."/>
            <person name="Abe K."/>
            <person name="Kamihara K."/>
            <person name="Katsuta N."/>
            <person name="Sato K."/>
            <person name="Tanikawa M."/>
            <person name="Yamazaki M."/>
            <person name="Ninomiya K."/>
            <person name="Ishibashi T."/>
            <person name="Yamashita H."/>
            <person name="Murakawa K."/>
            <person name="Fujimori K."/>
            <person name="Tanai H."/>
            <person name="Kimata M."/>
            <person name="Watanabe M."/>
            <person name="Hiraoka S."/>
            <person name="Chiba Y."/>
            <person name="Ishida S."/>
            <person name="Ono Y."/>
            <person name="Takiguchi S."/>
            <person name="Watanabe S."/>
            <person name="Yosida M."/>
            <person name="Hotuta T."/>
            <person name="Kusano J."/>
            <person name="Kanehori K."/>
            <person name="Takahashi-Fujii A."/>
            <person name="Hara H."/>
            <person name="Tanase T.-O."/>
            <person name="Nomura Y."/>
            <person name="Togiya S."/>
            <person name="Komai F."/>
            <person name="Hara R."/>
            <person name="Takeuchi K."/>
            <person name="Arita M."/>
            <person name="Imose N."/>
            <person name="Musashino K."/>
            <person name="Yuuki H."/>
            <person name="Oshima A."/>
            <person name="Sasaki N."/>
            <person name="Aotsuka S."/>
            <person name="Yoshikawa Y."/>
            <person name="Matsunawa H."/>
            <person name="Ichihara T."/>
            <person name="Shiohata N."/>
            <person name="Sano S."/>
            <person name="Moriya S."/>
            <person name="Momiyama H."/>
            <person name="Satoh N."/>
            <person name="Takami S."/>
            <person name="Terashima Y."/>
            <person name="Suzuki O."/>
            <person name="Nakagawa S."/>
            <person name="Senoh A."/>
            <person name="Mizoguchi H."/>
            <person name="Goto Y."/>
            <person name="Shimizu F."/>
            <person name="Wakebe H."/>
            <person name="Hishigaki H."/>
            <person name="Watanabe T."/>
            <person name="Sugiyama A."/>
            <person name="Takemoto M."/>
            <person name="Kawakami B."/>
            <person name="Yamazaki M."/>
            <person name="Watanabe K."/>
            <person name="Kumagai A."/>
            <person name="Itakura S."/>
            <person name="Fukuzumi Y."/>
            <person name="Fujimori Y."/>
            <person name="Komiyama M."/>
            <person name="Tashiro H."/>
            <person name="Tanigami A."/>
            <person name="Fujiwara T."/>
            <person name="Ono T."/>
            <person name="Yamada K."/>
            <person name="Fujii Y."/>
            <person name="Ozaki K."/>
            <person name="Hirao M."/>
            <person name="Ohmori Y."/>
            <person name="Kawabata A."/>
            <person name="Hikiji T."/>
            <person name="Kobatake N."/>
            <person name="Inagaki H."/>
            <person name="Ikema Y."/>
            <person name="Okamoto S."/>
            <person name="Okitani R."/>
            <person name="Kawakami T."/>
            <person name="Noguchi S."/>
            <person name="Itoh T."/>
            <person name="Shigeta K."/>
            <person name="Senba T."/>
            <person name="Matsumura K."/>
            <person name="Nakajima Y."/>
            <person name="Mizuno T."/>
            <person name="Morinaga M."/>
            <person name="Sasaki M."/>
            <person name="Togashi T."/>
            <person name="Oyama M."/>
            <person name="Hata H."/>
            <person name="Watanabe M."/>
            <person name="Komatsu T."/>
            <person name="Mizushima-Sugano J."/>
            <person name="Satoh T."/>
            <person name="Shirai Y."/>
            <person name="Takahashi Y."/>
            <person name="Nakagawa K."/>
            <person name="Okumura K."/>
            <person name="Nagase T."/>
            <person name="Nomura N."/>
            <person name="Kikuchi H."/>
            <person name="Masuho Y."/>
            <person name="Yamashita R."/>
            <person name="Nakai K."/>
            <person name="Yada T."/>
            <person name="Nakamura Y."/>
            <person name="Ohara O."/>
            <person name="Isogai T."/>
            <person name="Sugano S."/>
        </authorList>
    </citation>
    <scope>NUCLEOTIDE SEQUENCE [LARGE SCALE MRNA] (ISOFORM 2)</scope>
    <scope>NUCLEOTIDE SEQUENCE [LARGE SCALE MRNA] OF 589-1133 (ISOFORM 1)</scope>
    <source>
        <tissue>Testis</tissue>
    </source>
</reference>
<reference key="2">
    <citation type="journal article" date="2006" name="Nature">
        <title>The DNA sequence and biological annotation of human chromosome 1.</title>
        <authorList>
            <person name="Gregory S.G."/>
            <person name="Barlow K.F."/>
            <person name="McLay K.E."/>
            <person name="Kaul R."/>
            <person name="Swarbreck D."/>
            <person name="Dunham A."/>
            <person name="Scott C.E."/>
            <person name="Howe K.L."/>
            <person name="Woodfine K."/>
            <person name="Spencer C.C.A."/>
            <person name="Jones M.C."/>
            <person name="Gillson C."/>
            <person name="Searle S."/>
            <person name="Zhou Y."/>
            <person name="Kokocinski F."/>
            <person name="McDonald L."/>
            <person name="Evans R."/>
            <person name="Phillips K."/>
            <person name="Atkinson A."/>
            <person name="Cooper R."/>
            <person name="Jones C."/>
            <person name="Hall R.E."/>
            <person name="Andrews T.D."/>
            <person name="Lloyd C."/>
            <person name="Ainscough R."/>
            <person name="Almeida J.P."/>
            <person name="Ambrose K.D."/>
            <person name="Anderson F."/>
            <person name="Andrew R.W."/>
            <person name="Ashwell R.I.S."/>
            <person name="Aubin K."/>
            <person name="Babbage A.K."/>
            <person name="Bagguley C.L."/>
            <person name="Bailey J."/>
            <person name="Beasley H."/>
            <person name="Bethel G."/>
            <person name="Bird C.P."/>
            <person name="Bray-Allen S."/>
            <person name="Brown J.Y."/>
            <person name="Brown A.J."/>
            <person name="Buckley D."/>
            <person name="Burton J."/>
            <person name="Bye J."/>
            <person name="Carder C."/>
            <person name="Chapman J.C."/>
            <person name="Clark S.Y."/>
            <person name="Clarke G."/>
            <person name="Clee C."/>
            <person name="Cobley V."/>
            <person name="Collier R.E."/>
            <person name="Corby N."/>
            <person name="Coville G.J."/>
            <person name="Davies J."/>
            <person name="Deadman R."/>
            <person name="Dunn M."/>
            <person name="Earthrowl M."/>
            <person name="Ellington A.G."/>
            <person name="Errington H."/>
            <person name="Frankish A."/>
            <person name="Frankland J."/>
            <person name="French L."/>
            <person name="Garner P."/>
            <person name="Garnett J."/>
            <person name="Gay L."/>
            <person name="Ghori M.R.J."/>
            <person name="Gibson R."/>
            <person name="Gilby L.M."/>
            <person name="Gillett W."/>
            <person name="Glithero R.J."/>
            <person name="Grafham D.V."/>
            <person name="Griffiths C."/>
            <person name="Griffiths-Jones S."/>
            <person name="Grocock R."/>
            <person name="Hammond S."/>
            <person name="Harrison E.S.I."/>
            <person name="Hart E."/>
            <person name="Haugen E."/>
            <person name="Heath P.D."/>
            <person name="Holmes S."/>
            <person name="Holt K."/>
            <person name="Howden P.J."/>
            <person name="Hunt A.R."/>
            <person name="Hunt S.E."/>
            <person name="Hunter G."/>
            <person name="Isherwood J."/>
            <person name="James R."/>
            <person name="Johnson C."/>
            <person name="Johnson D."/>
            <person name="Joy A."/>
            <person name="Kay M."/>
            <person name="Kershaw J.K."/>
            <person name="Kibukawa M."/>
            <person name="Kimberley A.M."/>
            <person name="King A."/>
            <person name="Knights A.J."/>
            <person name="Lad H."/>
            <person name="Laird G."/>
            <person name="Lawlor S."/>
            <person name="Leongamornlert D.A."/>
            <person name="Lloyd D.M."/>
            <person name="Loveland J."/>
            <person name="Lovell J."/>
            <person name="Lush M.J."/>
            <person name="Lyne R."/>
            <person name="Martin S."/>
            <person name="Mashreghi-Mohammadi M."/>
            <person name="Matthews L."/>
            <person name="Matthews N.S.W."/>
            <person name="McLaren S."/>
            <person name="Milne S."/>
            <person name="Mistry S."/>
            <person name="Moore M.J.F."/>
            <person name="Nickerson T."/>
            <person name="O'Dell C.N."/>
            <person name="Oliver K."/>
            <person name="Palmeiri A."/>
            <person name="Palmer S.A."/>
            <person name="Parker A."/>
            <person name="Patel D."/>
            <person name="Pearce A.V."/>
            <person name="Peck A.I."/>
            <person name="Pelan S."/>
            <person name="Phelps K."/>
            <person name="Phillimore B.J."/>
            <person name="Plumb R."/>
            <person name="Rajan J."/>
            <person name="Raymond C."/>
            <person name="Rouse G."/>
            <person name="Saenphimmachak C."/>
            <person name="Sehra H.K."/>
            <person name="Sheridan E."/>
            <person name="Shownkeen R."/>
            <person name="Sims S."/>
            <person name="Skuce C.D."/>
            <person name="Smith M."/>
            <person name="Steward C."/>
            <person name="Subramanian S."/>
            <person name="Sycamore N."/>
            <person name="Tracey A."/>
            <person name="Tromans A."/>
            <person name="Van Helmond Z."/>
            <person name="Wall M."/>
            <person name="Wallis J.M."/>
            <person name="White S."/>
            <person name="Whitehead S.L."/>
            <person name="Wilkinson J.E."/>
            <person name="Willey D.L."/>
            <person name="Williams H."/>
            <person name="Wilming L."/>
            <person name="Wray P.W."/>
            <person name="Wu Z."/>
            <person name="Coulson A."/>
            <person name="Vaudin M."/>
            <person name="Sulston J.E."/>
            <person name="Durbin R.M."/>
            <person name="Hubbard T."/>
            <person name="Wooster R."/>
            <person name="Dunham I."/>
            <person name="Carter N.P."/>
            <person name="McVean G."/>
            <person name="Ross M.T."/>
            <person name="Harrow J."/>
            <person name="Olson M.V."/>
            <person name="Beck S."/>
            <person name="Rogers J."/>
            <person name="Bentley D.R."/>
        </authorList>
    </citation>
    <scope>NUCLEOTIDE SEQUENCE [LARGE SCALE GENOMIC DNA]</scope>
</reference>
<reference key="3">
    <citation type="submission" date="2002-11" db="EMBL/GenBank/DDBJ databases">
        <title>The nucleotide sequence of a long cDNA clone isolated from human.</title>
        <authorList>
            <person name="Nagase T."/>
            <person name="Kikuno R."/>
            <person name="Ohara O."/>
        </authorList>
    </citation>
    <scope>NUCLEOTIDE SEQUENCE [LARGE SCALE MRNA] OF 25-1133 (ISOFORM 1)</scope>
    <scope>TISSUE SPECIFICITY</scope>
    <source>
        <tissue>Brain</tissue>
    </source>
</reference>
<reference key="4">
    <citation type="journal article" date="2008" name="Proc. Natl. Acad. Sci. U.S.A.">
        <title>A quantitative atlas of mitotic phosphorylation.</title>
        <authorList>
            <person name="Dephoure N."/>
            <person name="Zhou C."/>
            <person name="Villen J."/>
            <person name="Beausoleil S.A."/>
            <person name="Bakalarski C.E."/>
            <person name="Elledge S.J."/>
            <person name="Gygi S.P."/>
        </authorList>
    </citation>
    <scope>PHOSPHORYLATION [LARGE SCALE ANALYSIS] AT SER-535</scope>
    <scope>IDENTIFICATION BY MASS SPECTROMETRY [LARGE SCALE ANALYSIS]</scope>
    <source>
        <tissue>Cervix carcinoma</tissue>
    </source>
</reference>
<reference key="5">
    <citation type="journal article" date="2013" name="Immunol. Rev.">
        <title>Molecular control of Tfh-cell differentiation by Roquin family proteins.</title>
        <authorList>
            <person name="Heissmeyer V."/>
            <person name="Vogel K.U."/>
        </authorList>
    </citation>
    <scope>REVIEW</scope>
</reference>
<reference key="6">
    <citation type="journal article" date="2013" name="J. Proteome Res.">
        <title>Toward a comprehensive characterization of a human cancer cell phosphoproteome.</title>
        <authorList>
            <person name="Zhou H."/>
            <person name="Di Palma S."/>
            <person name="Preisinger C."/>
            <person name="Peng M."/>
            <person name="Polat A.N."/>
            <person name="Heck A.J."/>
            <person name="Mohammed S."/>
        </authorList>
    </citation>
    <scope>PHOSPHORYLATION [LARGE SCALE ANALYSIS] AT SER-535 AND SER-863</scope>
    <scope>IDENTIFICATION BY MASS SPECTROMETRY [LARGE SCALE ANALYSIS]</scope>
    <source>
        <tissue>Cervix carcinoma</tissue>
        <tissue>Erythroleukemia</tissue>
    </source>
</reference>
<reference key="7">
    <citation type="journal article" date="2014" name="J. Proteomics">
        <title>An enzyme assisted RP-RPLC approach for in-depth analysis of human liver phosphoproteome.</title>
        <authorList>
            <person name="Bian Y."/>
            <person name="Song C."/>
            <person name="Cheng K."/>
            <person name="Dong M."/>
            <person name="Wang F."/>
            <person name="Huang J."/>
            <person name="Sun D."/>
            <person name="Wang L."/>
            <person name="Ye M."/>
            <person name="Zou H."/>
        </authorList>
    </citation>
    <scope>PHOSPHORYLATION [LARGE SCALE ANALYSIS] AT SER-462</scope>
    <scope>IDENTIFICATION BY MASS SPECTROMETRY [LARGE SCALE ANALYSIS]</scope>
    <source>
        <tissue>Liver</tissue>
    </source>
</reference>
<reference key="8">
    <citation type="journal article" date="2019" name="Nat. Commun.">
        <title>A human immune dysregulation syndrome characterized by severe hyperinflammation with a homozygous nonsense Roquin-1 mutation.</title>
        <authorList>
            <person name="Tavernier S.J."/>
            <person name="Athanasopoulos V."/>
            <person name="Verloo P."/>
            <person name="Behrens G."/>
            <person name="Staal J."/>
            <person name="Bogaert D.J."/>
            <person name="Naesens L."/>
            <person name="De Bruyne M."/>
            <person name="Van Gassen S."/>
            <person name="Parthoens E."/>
            <person name="Ellyard J."/>
            <person name="Cappello J."/>
            <person name="Morris L.X."/>
            <person name="Van Gorp H."/>
            <person name="Van Isterdael G."/>
            <person name="Saeys Y."/>
            <person name="Lamkanfi M."/>
            <person name="Schelstraete P."/>
            <person name="Dehoorne J."/>
            <person name="Bordon V."/>
            <person name="Van Coster R."/>
            <person name="Lambrecht B.N."/>
            <person name="Menten B."/>
            <person name="Beyaert R."/>
            <person name="Vinuesa C.G."/>
            <person name="Heissmeyer V."/>
            <person name="Dullaers M."/>
            <person name="Haerynck F."/>
        </authorList>
    </citation>
    <scope>FUNCTION</scope>
    <scope>SUBUNIT</scope>
    <scope>SUBCELLULAR LOCATION</scope>
    <scope>INVOLVEMENT IN IMDYSHI</scope>
    <scope>VARIANT IMDYSHI 688-ARG--GLU-1133 DEL</scope>
    <scope>CHARACTERIZATION OF VARIANT IMDYSHI 688-ARG--GLU-1133 DEL</scope>
</reference>
<reference evidence="17" key="9">
    <citation type="journal article" date="2014" name="Nat. Commun.">
        <title>Roquin binding to target mRNAs involves a winged helix-turn-helix motif.</title>
        <authorList>
            <person name="Schuetz A."/>
            <person name="Murakawa Y."/>
            <person name="Rosenbaum E."/>
            <person name="Landthaler M."/>
            <person name="Heinemann U."/>
        </authorList>
    </citation>
    <scope>X-RAY CRYSTALLOGRAPHY (1.91 ANGSTROMS) OF 177-328</scope>
    <scope>RNA-BINDING</scope>
    <scope>MUTAGENESIS OF 219-ARG-LYS-220 AND 259-LYS-ARG-260</scope>
    <scope>SUBUNIT</scope>
</reference>
<reference evidence="15 16" key="10">
    <citation type="journal article" date="2014" name="Nat. Struct. Mol. Biol.">
        <title>The ROQ domain of Roquin recognizes mRNA constitutive-decay element and double-stranded RNA.</title>
        <authorList>
            <person name="Tan D."/>
            <person name="Zhou M."/>
            <person name="Kiledjian M."/>
            <person name="Tong L."/>
        </authorList>
    </citation>
    <scope>X-RAY CRYSTALLOGRAPHY (1.90 ANGSTROMS) OF 88-407 IN COMPLEX WITH RNA</scope>
    <scope>FUNCTION</scope>
    <scope>RNA-BINDING</scope>
    <scope>SUBUNIT</scope>
    <scope>MUTAGENESIS OF 135-ARG-LYS-136; ARG-164; 239-LYS-THR-240; 247-GLN--ARG-251; 318-GLN-SER-319 AND 322-ASP-LYS-323</scope>
</reference>
<reference evidence="14" key="11">
    <citation type="journal article" date="2015" name="Nat. Commun.">
        <title>Roquin binds microRNA-146a and Argonaute2 to regulate microRNA homeostasis.</title>
        <authorList>
            <person name="Srivastava M."/>
            <person name="Duan G."/>
            <person name="Kershaw N.J."/>
            <person name="Athanasopoulos V."/>
            <person name="Yeo J.H."/>
            <person name="Ose T."/>
            <person name="Hu D."/>
            <person name="Brown S.H."/>
            <person name="Jergic S."/>
            <person name="Patel H.R."/>
            <person name="Pratama A."/>
            <person name="Richards S."/>
            <person name="Verma A."/>
            <person name="Jones E.Y."/>
            <person name="Heissmeyer V."/>
            <person name="Preiss T."/>
            <person name="Dixon N.E."/>
            <person name="Chong M.M."/>
            <person name="Babon J.J."/>
            <person name="Vinuesa C.G."/>
        </authorList>
    </citation>
    <scope>X-RAY CRYSTALLOGRAPHY (2.20 ANGSTROMS) OF 145-344 IN COMPLEX WITH RNA</scope>
    <scope>FUNCTION</scope>
    <scope>RNA-BINDING</scope>
    <scope>SUBUNIT</scope>
    <scope>INTERACTION WITH AGO2</scope>
</reference>
<reference evidence="18" key="12">
    <citation type="journal article" date="2015" name="Sci. Rep.">
        <title>New Insights into the RNA-Binding and E3 Ubiquitin Ligase Activities of Roquins.</title>
        <authorList>
            <person name="Zhang Q."/>
            <person name="Fan L."/>
            <person name="Hou F."/>
            <person name="Dong A."/>
            <person name="Wang Y.X."/>
            <person name="Tong Y."/>
        </authorList>
    </citation>
    <scope>X-RAY CRYSTALLOGRAPHY (1.70 ANGSTROMS) OF 159-328</scope>
    <scope>FUNCTION</scope>
    <scope>DOMAIN</scope>
    <scope>CATALYTIC ACTIVITY</scope>
    <scope>PATHWAY</scope>
</reference>